<dbReference type="EMBL" id="BK009406">
    <property type="protein sequence ID" value="DAA64995.1"/>
    <property type="molecule type" value="mRNA"/>
</dbReference>
<dbReference type="EMBL" id="EG364159">
    <property type="status" value="NOT_ANNOTATED_CDS"/>
    <property type="molecule type" value="mRNA"/>
</dbReference>
<dbReference type="PDB" id="5HCC">
    <property type="method" value="X-ray"/>
    <property type="resolution" value="2.59 A"/>
    <property type="chains" value="D=25-102"/>
</dbReference>
<dbReference type="PDBsum" id="5HCC"/>
<dbReference type="SMR" id="A0A146B485"/>
<dbReference type="VEuPathDB" id="VectorBase:DAND_016416"/>
<dbReference type="GO" id="GO:0005576">
    <property type="term" value="C:extracellular region"/>
    <property type="evidence" value="ECO:0007669"/>
    <property type="project" value="UniProtKB-SubCell"/>
</dbReference>
<dbReference type="GO" id="GO:0090729">
    <property type="term" value="F:toxin activity"/>
    <property type="evidence" value="ECO:0007669"/>
    <property type="project" value="UniProtKB-KW"/>
</dbReference>
<dbReference type="CDD" id="cd22951">
    <property type="entry name" value="C5_RaCI-like"/>
    <property type="match status" value="1"/>
</dbReference>
<feature type="signal peptide" evidence="1">
    <location>
        <begin position="1"/>
        <end position="24"/>
    </location>
</feature>
<feature type="chain" id="PRO_5007523338" description="Complement inhibitor RaCI3">
    <location>
        <begin position="25"/>
        <end position="102"/>
    </location>
</feature>
<feature type="disulfide bond" evidence="2 8">
    <location>
        <begin position="37"/>
        <end position="61"/>
    </location>
</feature>
<feature type="disulfide bond" evidence="2 8">
    <location>
        <begin position="42"/>
        <end position="63"/>
    </location>
</feature>
<feature type="disulfide bond" evidence="2 8">
    <location>
        <begin position="57"/>
        <end position="78"/>
    </location>
</feature>
<feature type="strand" evidence="9">
    <location>
        <begin position="41"/>
        <end position="46"/>
    </location>
</feature>
<feature type="strand" evidence="9">
    <location>
        <begin position="52"/>
        <end position="55"/>
    </location>
</feature>
<feature type="strand" evidence="9">
    <location>
        <begin position="61"/>
        <end position="64"/>
    </location>
</feature>
<feature type="strand" evidence="9">
    <location>
        <begin position="72"/>
        <end position="81"/>
    </location>
</feature>
<protein>
    <recommendedName>
        <fullName evidence="4">Complement inhibitor RaCI3</fullName>
    </recommendedName>
</protein>
<comment type="function">
    <text evidence="2 3">Complement inhibitor (PubMed:27018802). Prevents complement-mediated C5 activation by binding to C5 (PubMed:27018802). Binds C5 at a different binding site than the other tick complement inhibitors OmCI and CirpT1, and the drug eculizumab (PubMed:27018802, PubMed:31871188). Inhibits complement in human and guinea pig but not in other species tested (rabbit, rat, mouse, and pig) (PubMed:27018802).</text>
</comment>
<comment type="subcellular location">
    <subcellularLocation>
        <location evidence="6">Secreted</location>
    </subcellularLocation>
</comment>
<comment type="tissue specificity">
    <text evidence="6">Expressed in salivary glands.</text>
</comment>
<comment type="similarity">
    <text evidence="5">Belongs to the RaCI family.</text>
</comment>
<accession>A0A146B485</accession>
<accession>A0A158RFT3</accession>
<sequence>MAALNGLVLLLLTISAMFISECYSSGESQSIQRKGQCEEVICHRKLNHLGERVTSGCPTGCLCVIREPDNVDNANGTCYALMSSTTTTTTTPDGTTTSEEEE</sequence>
<organism>
    <name type="scientific">Dermacentor andersoni</name>
    <name type="common">Rocky mountain wood tick</name>
    <dbReference type="NCBI Taxonomy" id="34620"/>
    <lineage>
        <taxon>Eukaryota</taxon>
        <taxon>Metazoa</taxon>
        <taxon>Ecdysozoa</taxon>
        <taxon>Arthropoda</taxon>
        <taxon>Chelicerata</taxon>
        <taxon>Arachnida</taxon>
        <taxon>Acari</taxon>
        <taxon>Parasitiformes</taxon>
        <taxon>Ixodida</taxon>
        <taxon>Ixodoidea</taxon>
        <taxon>Ixodidae</taxon>
        <taxon>Rhipicephalinae</taxon>
        <taxon>Dermacentor</taxon>
    </lineage>
</organism>
<proteinExistence type="evidence at protein level"/>
<name>C5I3_DERAN</name>
<reference evidence="7 8" key="1">
    <citation type="journal article" date="2016" name="Nat. Struct. Mol. Biol.">
        <title>Structural basis for therapeutic inhibition of complement C5.</title>
        <authorList>
            <person name="Jore M.M."/>
            <person name="Johnson S."/>
            <person name="Sheppard D."/>
            <person name="Barber N.M."/>
            <person name="Li Y.I."/>
            <person name="Nunn M.A."/>
            <person name="Elmlund H."/>
            <person name="Lea S.M."/>
        </authorList>
    </citation>
    <scope>NUCLEOTIDE SEQUENCE [MRNA]</scope>
    <scope>X-RAY CRYSTALLOGRAPHY (2.59 ANGSTROMS) OF 25-102 IN COMPLEX WITH HUMAN COMPLEMENT C5 AND THE TICK COMPLEMENT INHBIBITOR OMCI</scope>
    <scope>FUNCTION</scope>
    <scope>DISULFIDE BOND</scope>
    <source>
        <tissue>Salivary gland</tissue>
    </source>
</reference>
<reference key="2">
    <citation type="journal article" date="2020" name="Proc. Natl. Acad. Sci. U.S.A.">
        <title>An inhibitor of complement C5 provides structural insights into activation.</title>
        <authorList>
            <person name="Reichhardt M.P."/>
            <person name="Johnson S."/>
            <person name="Tang T."/>
            <person name="Morgan T."/>
            <person name="Tebeka N."/>
            <person name="Popitsch N."/>
            <person name="Deme J.C."/>
            <person name="Jore M.M."/>
            <person name="Lea S.M."/>
        </authorList>
    </citation>
    <scope>FUNCTION</scope>
</reference>
<evidence type="ECO:0000255" key="1"/>
<evidence type="ECO:0000269" key="2">
    <source>
    </source>
</evidence>
<evidence type="ECO:0000269" key="3">
    <source>
    </source>
</evidence>
<evidence type="ECO:0000303" key="4">
    <source>
    </source>
</evidence>
<evidence type="ECO:0000305" key="5"/>
<evidence type="ECO:0000305" key="6">
    <source>
    </source>
</evidence>
<evidence type="ECO:0000312" key="7">
    <source>
        <dbReference type="EMBL" id="DAA64995.1"/>
    </source>
</evidence>
<evidence type="ECO:0007744" key="8">
    <source>
        <dbReference type="PDB" id="5HCC"/>
    </source>
</evidence>
<evidence type="ECO:0007829" key="9">
    <source>
        <dbReference type="PDB" id="5HCC"/>
    </source>
</evidence>
<keyword id="KW-0002">3D-structure</keyword>
<keyword id="KW-1216">Complement system impairing toxin</keyword>
<keyword id="KW-1015">Disulfide bond</keyword>
<keyword id="KW-0964">Secreted</keyword>
<keyword id="KW-0732">Signal</keyword>
<keyword id="KW-0800">Toxin</keyword>